<reference key="1">
    <citation type="journal article" date="1993" name="Virology">
        <title>Nucleotide sequence and biological properties of a pathogenic proviral molecular clone of neurovirulent visna virus.</title>
        <authorList>
            <person name="Andresson O.S."/>
            <person name="Elser J.E."/>
            <person name="Tobin G.J."/>
            <person name="Greenwood J.D."/>
            <person name="Gonda M.A."/>
            <person name="Georgsson G."/>
            <person name="Andresdottir V."/>
            <person name="Benediktsdottir E."/>
            <person name="Carlsdottir H.M."/>
            <person name="Maentylae E.O."/>
            <person name="Rafnar B."/>
            <person name="Palsson P.A."/>
            <person name="Casey J.W."/>
            <person name="Petursson G."/>
        </authorList>
    </citation>
    <scope>NUCLEOTIDE SEQUENCE [GENOMIC RNA]</scope>
</reference>
<accession>P35957</accession>
<keyword id="KW-0175">Coiled coil</keyword>
<keyword id="KW-1035">Host cytoplasm</keyword>
<keyword id="KW-1048">Host nucleus</keyword>
<keyword id="KW-0509">mRNA transport</keyword>
<keyword id="KW-0694">RNA-binding</keyword>
<keyword id="KW-0813">Transport</keyword>
<organismHost>
    <name type="scientific">Ovis aries</name>
    <name type="common">Sheep</name>
    <dbReference type="NCBI Taxonomy" id="9940"/>
</organismHost>
<proteinExistence type="inferred from homology"/>
<protein>
    <recommendedName>
        <fullName>Protein Rev</fullName>
    </recommendedName>
</protein>
<dbReference type="EMBL" id="L06906">
    <property type="protein sequence ID" value="AAA48357.1"/>
    <property type="status" value="ALT_SEQ"/>
    <property type="molecule type" value="Genomic_RNA"/>
</dbReference>
<dbReference type="EMBL" id="S55323">
    <property type="protein sequence ID" value="AAB25464.1"/>
    <property type="molecule type" value="Genomic_DNA"/>
</dbReference>
<dbReference type="SMR" id="P35957"/>
<dbReference type="KEGG" id="vg:1490011"/>
<dbReference type="Proteomes" id="UP000202605">
    <property type="component" value="Segment"/>
</dbReference>
<dbReference type="GO" id="GO:0030430">
    <property type="term" value="C:host cell cytoplasm"/>
    <property type="evidence" value="ECO:0007669"/>
    <property type="project" value="UniProtKB-SubCell"/>
</dbReference>
<dbReference type="GO" id="GO:0044196">
    <property type="term" value="C:host cell nucleolus"/>
    <property type="evidence" value="ECO:0007669"/>
    <property type="project" value="UniProtKB-SubCell"/>
</dbReference>
<dbReference type="GO" id="GO:0003723">
    <property type="term" value="F:RNA binding"/>
    <property type="evidence" value="ECO:0007669"/>
    <property type="project" value="UniProtKB-KW"/>
</dbReference>
<dbReference type="GO" id="GO:0051028">
    <property type="term" value="P:mRNA transport"/>
    <property type="evidence" value="ECO:0007669"/>
    <property type="project" value="UniProtKB-KW"/>
</dbReference>
<dbReference type="InterPro" id="IPR016400">
    <property type="entry name" value="Rev_lentivir"/>
</dbReference>
<dbReference type="PIRSF" id="PIRSF003867">
    <property type="entry name" value="Rev_lenti-OC"/>
    <property type="match status" value="1"/>
</dbReference>
<comment type="function">
    <text evidence="1">Escorts unspliced or incompletely spliced viral pre-mRNAs (late transcripts) out of the nucleus of infected cells. These pre-mRNAs carry a recognition sequence called Rev responsive element (RRE) located in the env gene, that is not present in fully spliced viral mRNAs (early transcripts). This function is essential since most viral proteins are translated from unspliced or partially spliced pre-mRNAs which cannot exit the nucleus by the pathway used by fully processed cellular mRNAs (By similarity).</text>
</comment>
<comment type="subunit">
    <text evidence="1">Homomultimer; when bound to the RRE. Multimeric assembly is essential for activity (By similarity).</text>
</comment>
<comment type="subcellular location">
    <subcellularLocation>
        <location evidence="1">Host nucleus</location>
        <location evidence="1">Host nucleolus</location>
    </subcellularLocation>
    <subcellularLocation>
        <location evidence="1">Host cytoplasm</location>
    </subcellularLocation>
    <text evidence="1">The presence of both nuclear import and nuclear export signals leads to continuous shuttling between the nucleus and cytoplasm.</text>
</comment>
<comment type="domain">
    <text evidence="1">The RNA-binding motif binds to the RRE present in incompletely spliced viral pre-mRNAs. This region also contains the NLS which mediates nuclear localization. These overlapping functions prevent Rev bound to RRE from undesirable return to the nucleus. When Rev binds the RRE, the NLS becomes masked while the NES remains accessible (By similarity).</text>
</comment>
<gene>
    <name type="primary">rev</name>
</gene>
<name>REV_VILVK</name>
<organism>
    <name type="scientific">Maedi visna virus (strain KV1772)</name>
    <name type="common">MVV</name>
    <name type="synonym">Visna lentivirus</name>
    <dbReference type="NCBI Taxonomy" id="36374"/>
    <lineage>
        <taxon>Viruses</taxon>
        <taxon>Riboviria</taxon>
        <taxon>Pararnavirae</taxon>
        <taxon>Artverviricota</taxon>
        <taxon>Revtraviricetes</taxon>
        <taxon>Ortervirales</taxon>
        <taxon>Retroviridae</taxon>
        <taxon>Orthoretrovirinae</taxon>
        <taxon>Lentivirus</taxon>
        <taxon>Visna-maedi virus</taxon>
    </lineage>
</organism>
<feature type="chain" id="PRO_0000085482" description="Protein Rev">
    <location>
        <begin position="1"/>
        <end position="167"/>
    </location>
</feature>
<feature type="region of interest" description="Disordered" evidence="3">
    <location>
        <begin position="1"/>
        <end position="75"/>
    </location>
</feature>
<feature type="region of interest" description="Disordered" evidence="3">
    <location>
        <begin position="144"/>
        <end position="167"/>
    </location>
</feature>
<feature type="coiled-coil region" evidence="2">
    <location>
        <begin position="21"/>
        <end position="45"/>
    </location>
</feature>
<feature type="short sequence motif" description="Nuclear localization signal and RNA-binding (RRE)" evidence="1">
    <location>
        <begin position="75"/>
        <end position="92"/>
    </location>
</feature>
<feature type="short sequence motif" description="Nuclear export signal" evidence="1">
    <location>
        <begin position="106"/>
        <end position="115"/>
    </location>
</feature>
<feature type="compositionally biased region" description="Basic and acidic residues" evidence="3">
    <location>
        <begin position="1"/>
        <end position="20"/>
    </location>
</feature>
<feature type="compositionally biased region" description="Polar residues" evidence="3">
    <location>
        <begin position="158"/>
        <end position="167"/>
    </location>
</feature>
<evidence type="ECO:0000250" key="1"/>
<evidence type="ECO:0000255" key="2"/>
<evidence type="ECO:0000256" key="3">
    <source>
        <dbReference type="SAM" id="MobiDB-lite"/>
    </source>
</evidence>
<sequence>MASKESKPSRTTRRGMEPPLRETWNQVLQELVKRQQQEEEEQQGLVSGLQASKADQIYTGNSGDRSTGGIGGKTKKKRGWYKWLRKLRAREKNIPSQFYPDMESNMVGMENLTLETQLEDNALYNPATYIGDMAMDGREWMEWRESAQKEKRKGGLSGQRTNAYPGK</sequence>